<comment type="function">
    <text evidence="1">Cell wall formation. Catalyzes the transfer of a GlcNAc subunit on undecaprenyl-pyrophosphoryl-MurNAc-pentapeptide (lipid intermediate I) to form undecaprenyl-pyrophosphoryl-MurNAc-(pentapeptide)GlcNAc (lipid intermediate II).</text>
</comment>
<comment type="catalytic activity">
    <reaction evidence="1">
        <text>di-trans,octa-cis-undecaprenyl diphospho-N-acetyl-alpha-D-muramoyl-L-alanyl-D-glutamyl-meso-2,6-diaminopimeloyl-D-alanyl-D-alanine + UDP-N-acetyl-alpha-D-glucosamine = di-trans,octa-cis-undecaprenyl diphospho-[N-acetyl-alpha-D-glucosaminyl-(1-&gt;4)]-N-acetyl-alpha-D-muramoyl-L-alanyl-D-glutamyl-meso-2,6-diaminopimeloyl-D-alanyl-D-alanine + UDP + H(+)</text>
        <dbReference type="Rhea" id="RHEA:31227"/>
        <dbReference type="ChEBI" id="CHEBI:15378"/>
        <dbReference type="ChEBI" id="CHEBI:57705"/>
        <dbReference type="ChEBI" id="CHEBI:58223"/>
        <dbReference type="ChEBI" id="CHEBI:61387"/>
        <dbReference type="ChEBI" id="CHEBI:61388"/>
        <dbReference type="EC" id="2.4.1.227"/>
    </reaction>
</comment>
<comment type="pathway">
    <text evidence="1">Cell wall biogenesis; peptidoglycan biosynthesis.</text>
</comment>
<comment type="subcellular location">
    <subcellularLocation>
        <location evidence="1">Cell inner membrane</location>
        <topology evidence="1">Peripheral membrane protein</topology>
        <orientation evidence="1">Cytoplasmic side</orientation>
    </subcellularLocation>
</comment>
<comment type="similarity">
    <text evidence="1">Belongs to the glycosyltransferase 28 family. MurG subfamily.</text>
</comment>
<name>MURG_RICCK</name>
<feature type="chain" id="PRO_0000315157" description="UDP-N-acetylglucosamine--N-acetylmuramyl-(pentapeptide) pyrophosphoryl-undecaprenol N-acetylglucosamine transferase">
    <location>
        <begin position="1"/>
        <end position="354"/>
    </location>
</feature>
<feature type="binding site" evidence="1">
    <location>
        <begin position="11"/>
        <end position="13"/>
    </location>
    <ligand>
        <name>UDP-N-acetyl-alpha-D-glucosamine</name>
        <dbReference type="ChEBI" id="CHEBI:57705"/>
    </ligand>
</feature>
<feature type="binding site" evidence="1">
    <location>
        <position position="117"/>
    </location>
    <ligand>
        <name>UDP-N-acetyl-alpha-D-glucosamine</name>
        <dbReference type="ChEBI" id="CHEBI:57705"/>
    </ligand>
</feature>
<feature type="binding site" evidence="1">
    <location>
        <position position="160"/>
    </location>
    <ligand>
        <name>UDP-N-acetyl-alpha-D-glucosamine</name>
        <dbReference type="ChEBI" id="CHEBI:57705"/>
    </ligand>
</feature>
<feature type="binding site" evidence="1">
    <location>
        <position position="186"/>
    </location>
    <ligand>
        <name>UDP-N-acetyl-alpha-D-glucosamine</name>
        <dbReference type="ChEBI" id="CHEBI:57705"/>
    </ligand>
</feature>
<feature type="binding site" evidence="1">
    <location>
        <position position="288"/>
    </location>
    <ligand>
        <name>UDP-N-acetyl-alpha-D-glucosamine</name>
        <dbReference type="ChEBI" id="CHEBI:57705"/>
    </ligand>
</feature>
<gene>
    <name evidence="1" type="primary">murG</name>
    <name type="ordered locus">A1E_03310</name>
</gene>
<accession>A8EZ14</accession>
<evidence type="ECO:0000255" key="1">
    <source>
        <dbReference type="HAMAP-Rule" id="MF_00033"/>
    </source>
</evidence>
<organism>
    <name type="scientific">Rickettsia canadensis (strain McKiel)</name>
    <dbReference type="NCBI Taxonomy" id="293613"/>
    <lineage>
        <taxon>Bacteria</taxon>
        <taxon>Pseudomonadati</taxon>
        <taxon>Pseudomonadota</taxon>
        <taxon>Alphaproteobacteria</taxon>
        <taxon>Rickettsiales</taxon>
        <taxon>Rickettsiaceae</taxon>
        <taxon>Rickettsieae</taxon>
        <taxon>Rickettsia</taxon>
        <taxon>belli group</taxon>
    </lineage>
</organism>
<dbReference type="EC" id="2.4.1.227" evidence="1"/>
<dbReference type="EMBL" id="CP000409">
    <property type="protein sequence ID" value="ABV73597.1"/>
    <property type="molecule type" value="Genomic_DNA"/>
</dbReference>
<dbReference type="RefSeq" id="WP_012148792.1">
    <property type="nucleotide sequence ID" value="NC_009879.1"/>
</dbReference>
<dbReference type="SMR" id="A8EZ14"/>
<dbReference type="STRING" id="293613.A1E_03310"/>
<dbReference type="CAZy" id="GT28">
    <property type="family name" value="Glycosyltransferase Family 28"/>
</dbReference>
<dbReference type="KEGG" id="rcm:A1E_03310"/>
<dbReference type="eggNOG" id="COG0707">
    <property type="taxonomic scope" value="Bacteria"/>
</dbReference>
<dbReference type="HOGENOM" id="CLU_037404_2_1_5"/>
<dbReference type="UniPathway" id="UPA00219"/>
<dbReference type="Proteomes" id="UP000007056">
    <property type="component" value="Chromosome"/>
</dbReference>
<dbReference type="GO" id="GO:0005886">
    <property type="term" value="C:plasma membrane"/>
    <property type="evidence" value="ECO:0007669"/>
    <property type="project" value="UniProtKB-SubCell"/>
</dbReference>
<dbReference type="GO" id="GO:0051991">
    <property type="term" value="F:UDP-N-acetyl-D-glucosamine:N-acetylmuramoyl-L-alanyl-D-glutamyl-meso-2,6-diaminopimelyl-D-alanyl-D-alanine-diphosphoundecaprenol 4-beta-N-acetylglucosaminlytransferase activity"/>
    <property type="evidence" value="ECO:0007669"/>
    <property type="project" value="RHEA"/>
</dbReference>
<dbReference type="GO" id="GO:0050511">
    <property type="term" value="F:undecaprenyldiphospho-muramoylpentapeptide beta-N-acetylglucosaminyltransferase activity"/>
    <property type="evidence" value="ECO:0007669"/>
    <property type="project" value="UniProtKB-UniRule"/>
</dbReference>
<dbReference type="GO" id="GO:0005975">
    <property type="term" value="P:carbohydrate metabolic process"/>
    <property type="evidence" value="ECO:0007669"/>
    <property type="project" value="InterPro"/>
</dbReference>
<dbReference type="GO" id="GO:0051301">
    <property type="term" value="P:cell division"/>
    <property type="evidence" value="ECO:0007669"/>
    <property type="project" value="UniProtKB-KW"/>
</dbReference>
<dbReference type="GO" id="GO:0071555">
    <property type="term" value="P:cell wall organization"/>
    <property type="evidence" value="ECO:0007669"/>
    <property type="project" value="UniProtKB-KW"/>
</dbReference>
<dbReference type="GO" id="GO:0030259">
    <property type="term" value="P:lipid glycosylation"/>
    <property type="evidence" value="ECO:0007669"/>
    <property type="project" value="UniProtKB-UniRule"/>
</dbReference>
<dbReference type="GO" id="GO:0009252">
    <property type="term" value="P:peptidoglycan biosynthetic process"/>
    <property type="evidence" value="ECO:0007669"/>
    <property type="project" value="UniProtKB-UniRule"/>
</dbReference>
<dbReference type="GO" id="GO:0008360">
    <property type="term" value="P:regulation of cell shape"/>
    <property type="evidence" value="ECO:0007669"/>
    <property type="project" value="UniProtKB-KW"/>
</dbReference>
<dbReference type="CDD" id="cd03785">
    <property type="entry name" value="GT28_MurG"/>
    <property type="match status" value="1"/>
</dbReference>
<dbReference type="Gene3D" id="3.40.50.2000">
    <property type="entry name" value="Glycogen Phosphorylase B"/>
    <property type="match status" value="2"/>
</dbReference>
<dbReference type="HAMAP" id="MF_00033">
    <property type="entry name" value="MurG"/>
    <property type="match status" value="1"/>
</dbReference>
<dbReference type="InterPro" id="IPR006009">
    <property type="entry name" value="GlcNAc_MurG"/>
</dbReference>
<dbReference type="InterPro" id="IPR007235">
    <property type="entry name" value="Glyco_trans_28_C"/>
</dbReference>
<dbReference type="InterPro" id="IPR004276">
    <property type="entry name" value="GlycoTrans_28_N"/>
</dbReference>
<dbReference type="NCBIfam" id="TIGR01133">
    <property type="entry name" value="murG"/>
    <property type="match status" value="1"/>
</dbReference>
<dbReference type="PANTHER" id="PTHR21015:SF22">
    <property type="entry name" value="GLYCOSYLTRANSFERASE"/>
    <property type="match status" value="1"/>
</dbReference>
<dbReference type="PANTHER" id="PTHR21015">
    <property type="entry name" value="UDP-N-ACETYLGLUCOSAMINE--N-ACETYLMURAMYL-(PENTAPEPTIDE) PYROPHOSPHORYL-UNDECAPRENOL N-ACETYLGLUCOSAMINE TRANSFERASE 1"/>
    <property type="match status" value="1"/>
</dbReference>
<dbReference type="Pfam" id="PF04101">
    <property type="entry name" value="Glyco_tran_28_C"/>
    <property type="match status" value="1"/>
</dbReference>
<dbReference type="Pfam" id="PF03033">
    <property type="entry name" value="Glyco_transf_28"/>
    <property type="match status" value="1"/>
</dbReference>
<dbReference type="SUPFAM" id="SSF53756">
    <property type="entry name" value="UDP-Glycosyltransferase/glycogen phosphorylase"/>
    <property type="match status" value="1"/>
</dbReference>
<protein>
    <recommendedName>
        <fullName evidence="1">UDP-N-acetylglucosamine--N-acetylmuramyl-(pentapeptide) pyrophosphoryl-undecaprenol N-acetylglucosamine transferase</fullName>
        <ecNumber evidence="1">2.4.1.227</ecNumber>
    </recommendedName>
    <alternativeName>
        <fullName evidence="1">Undecaprenyl-PP-MurNAc-pentapeptide-UDPGlcNAc GlcNAc transferase</fullName>
    </alternativeName>
</protein>
<reference key="1">
    <citation type="submission" date="2007-09" db="EMBL/GenBank/DDBJ databases">
        <title>Complete genome sequence of Rickettsia canadensis.</title>
        <authorList>
            <person name="Madan A."/>
            <person name="Fahey J."/>
            <person name="Helton E."/>
            <person name="Ketteman M."/>
            <person name="Madan A."/>
            <person name="Rodrigues S."/>
            <person name="Sanchez A."/>
            <person name="Whiting M."/>
            <person name="Dasch G."/>
            <person name="Eremeeva M."/>
        </authorList>
    </citation>
    <scope>NUCLEOTIDE SEQUENCE [LARGE SCALE GENOMIC DNA]</scope>
    <source>
        <strain>McKiel</strain>
    </source>
</reference>
<keyword id="KW-0131">Cell cycle</keyword>
<keyword id="KW-0132">Cell division</keyword>
<keyword id="KW-0997">Cell inner membrane</keyword>
<keyword id="KW-1003">Cell membrane</keyword>
<keyword id="KW-0133">Cell shape</keyword>
<keyword id="KW-0961">Cell wall biogenesis/degradation</keyword>
<keyword id="KW-0328">Glycosyltransferase</keyword>
<keyword id="KW-0472">Membrane</keyword>
<keyword id="KW-0573">Peptidoglycan synthesis</keyword>
<keyword id="KW-0808">Transferase</keyword>
<sequence length="354" mass="39709">MKKIILVAGGTGGHFFPAVALGEELIKRGYEVHFIIDLRCKKYISQDMKVIFHILDLKRSGNIFLFLPRLSIAVLKAIRLLYNIKPSVIVGFGGYPVISSMFAAVFLRVPIIIHEQNSYLGKVNKFFTSFAKKIAISYKNIKNLPEFAKNKIVVTGGIVRKNIRNLGSVAGPRNDKLFTIFIFGGSQGAKLFSELIPASIQILIQKKPQLKLHIIQQAALDDQVKIKDIYLKLNITYELAEFFDNIALQYKDADLVISRAGASTIEELTYIGLPAIFIPLPSAADNHQYYNAKWLEDTKAGWCLEQNNISAGKLADKILDLISNTKILEDASHNLLKRRKEGHKLLSNLIEEVI</sequence>
<proteinExistence type="inferred from homology"/>